<comment type="function">
    <text evidence="1">Involved in the TCA cycle. Catalyzes the stereospecific interconversion of fumarate to L-malate.</text>
</comment>
<comment type="catalytic activity">
    <reaction evidence="1">
        <text>(S)-malate = fumarate + H2O</text>
        <dbReference type="Rhea" id="RHEA:12460"/>
        <dbReference type="ChEBI" id="CHEBI:15377"/>
        <dbReference type="ChEBI" id="CHEBI:15589"/>
        <dbReference type="ChEBI" id="CHEBI:29806"/>
        <dbReference type="EC" id="4.2.1.2"/>
    </reaction>
</comment>
<comment type="pathway">
    <text evidence="1">Carbohydrate metabolism; tricarboxylic acid cycle; (S)-malate from fumarate: step 1/1.</text>
</comment>
<comment type="subunit">
    <text evidence="1">Homotetramer.</text>
</comment>
<comment type="subcellular location">
    <subcellularLocation>
        <location evidence="1">Cytoplasm</location>
    </subcellularLocation>
</comment>
<comment type="miscellaneous">
    <text evidence="1">There are 2 substrate-binding sites: the catalytic A site, and the non-catalytic B site that may play a role in the transfer of substrate or product between the active site and the solvent. Alternatively, the B site may bind allosteric effectors.</text>
</comment>
<comment type="similarity">
    <text evidence="1">Belongs to the class-II fumarase/aspartase family. Fumarase subfamily.</text>
</comment>
<keyword id="KW-0963">Cytoplasm</keyword>
<keyword id="KW-0456">Lyase</keyword>
<keyword id="KW-0816">Tricarboxylic acid cycle</keyword>
<feature type="chain" id="PRO_0000161315" description="Fumarate hydratase class II">
    <location>
        <begin position="1"/>
        <end position="461"/>
    </location>
</feature>
<feature type="active site" description="Proton donor/acceptor" evidence="1">
    <location>
        <position position="186"/>
    </location>
</feature>
<feature type="active site" evidence="1">
    <location>
        <position position="316"/>
    </location>
</feature>
<feature type="binding site" evidence="1">
    <location>
        <begin position="97"/>
        <end position="99"/>
    </location>
    <ligand>
        <name>substrate</name>
    </ligand>
</feature>
<feature type="binding site" description="in site B" evidence="1">
    <location>
        <begin position="127"/>
        <end position="130"/>
    </location>
    <ligand>
        <name>substrate</name>
    </ligand>
</feature>
<feature type="binding site" evidence="1">
    <location>
        <begin position="137"/>
        <end position="139"/>
    </location>
    <ligand>
        <name>substrate</name>
    </ligand>
</feature>
<feature type="binding site" evidence="1">
    <location>
        <position position="185"/>
    </location>
    <ligand>
        <name>substrate</name>
    </ligand>
</feature>
<feature type="binding site" evidence="1">
    <location>
        <position position="317"/>
    </location>
    <ligand>
        <name>substrate</name>
    </ligand>
</feature>
<feature type="binding site" evidence="1">
    <location>
        <begin position="322"/>
        <end position="324"/>
    </location>
    <ligand>
        <name>substrate</name>
    </ligand>
</feature>
<feature type="site" description="Important for catalytic activity" evidence="1">
    <location>
        <position position="329"/>
    </location>
</feature>
<protein>
    <recommendedName>
        <fullName evidence="1">Fumarate hydratase class II</fullName>
        <shortName evidence="1">Fumarase C</shortName>
        <ecNumber evidence="1">4.2.1.2</ecNumber>
    </recommendedName>
    <alternativeName>
        <fullName evidence="1">Aerobic fumarase</fullName>
    </alternativeName>
    <alternativeName>
        <fullName evidence="1">Iron-independent fumarase</fullName>
    </alternativeName>
</protein>
<gene>
    <name evidence="1" type="primary">fumC</name>
    <name type="synonym">citG</name>
    <name type="ordered locus">SAS1772</name>
</gene>
<reference key="1">
    <citation type="journal article" date="2004" name="Proc. Natl. Acad. Sci. U.S.A.">
        <title>Complete genomes of two clinical Staphylococcus aureus strains: evidence for the rapid evolution of virulence and drug resistance.</title>
        <authorList>
            <person name="Holden M.T.G."/>
            <person name="Feil E.J."/>
            <person name="Lindsay J.A."/>
            <person name="Peacock S.J."/>
            <person name="Day N.P.J."/>
            <person name="Enright M.C."/>
            <person name="Foster T.J."/>
            <person name="Moore C.E."/>
            <person name="Hurst L."/>
            <person name="Atkin R."/>
            <person name="Barron A."/>
            <person name="Bason N."/>
            <person name="Bentley S.D."/>
            <person name="Chillingworth C."/>
            <person name="Chillingworth T."/>
            <person name="Churcher C."/>
            <person name="Clark L."/>
            <person name="Corton C."/>
            <person name="Cronin A."/>
            <person name="Doggett J."/>
            <person name="Dowd L."/>
            <person name="Feltwell T."/>
            <person name="Hance Z."/>
            <person name="Harris B."/>
            <person name="Hauser H."/>
            <person name="Holroyd S."/>
            <person name="Jagels K."/>
            <person name="James K.D."/>
            <person name="Lennard N."/>
            <person name="Line A."/>
            <person name="Mayes R."/>
            <person name="Moule S."/>
            <person name="Mungall K."/>
            <person name="Ormond D."/>
            <person name="Quail M.A."/>
            <person name="Rabbinowitsch E."/>
            <person name="Rutherford K.M."/>
            <person name="Sanders M."/>
            <person name="Sharp S."/>
            <person name="Simmonds M."/>
            <person name="Stevens K."/>
            <person name="Whitehead S."/>
            <person name="Barrell B.G."/>
            <person name="Spratt B.G."/>
            <person name="Parkhill J."/>
        </authorList>
    </citation>
    <scope>NUCLEOTIDE SEQUENCE [LARGE SCALE GENOMIC DNA]</scope>
    <source>
        <strain>MSSA476</strain>
    </source>
</reference>
<organism>
    <name type="scientific">Staphylococcus aureus (strain MSSA476)</name>
    <dbReference type="NCBI Taxonomy" id="282459"/>
    <lineage>
        <taxon>Bacteria</taxon>
        <taxon>Bacillati</taxon>
        <taxon>Bacillota</taxon>
        <taxon>Bacilli</taxon>
        <taxon>Bacillales</taxon>
        <taxon>Staphylococcaceae</taxon>
        <taxon>Staphylococcus</taxon>
    </lineage>
</organism>
<proteinExistence type="inferred from homology"/>
<sequence>MSVRIEHDTFGEIEVPADKYWGAQTERSKRNFPVGKERMPIEVVYGFAQLKRAAALANFDLGKLSEAKKDAIVYACDQILSGELDEHFPLVVWQTGSGTQSNMNVNEVVSYVANMYLKDHQIDESIHPNDDVNKSQSSNDTFPTAMHVALYQEVETKLEPALKLLRNTLKEKEDKFDSIIKIGRTHLQDATPIKLGQEISGWRYMLDRCEIMLSESKKHILNLAIGGTAVGTGINAHPEFGDKVAHYISENTGYPFVSSENKFHALTAHDEVVQLHGTLKALAGDLMKIANDVRWLASGPRAGLAEISIPENEPGSSIMPGKVNPTQCEMLTMVAVQVMGNDTVVGFASSQGNFELNVYKPVIMHNTLQSIYLLADGMETFNNNCAVGIEPIEENIDNYLNQSLMLVTALNPHIGYEKAAQIAKKAHKEGLTLKESAIQTGYVTEEQFEAWIKPEDMVDPH</sequence>
<evidence type="ECO:0000255" key="1">
    <source>
        <dbReference type="HAMAP-Rule" id="MF_00743"/>
    </source>
</evidence>
<name>FUMC_STAAS</name>
<accession>Q6G884</accession>
<dbReference type="EC" id="4.2.1.2" evidence="1"/>
<dbReference type="EMBL" id="BX571857">
    <property type="protein sequence ID" value="CAG43577.1"/>
    <property type="molecule type" value="Genomic_DNA"/>
</dbReference>
<dbReference type="RefSeq" id="WP_000116229.1">
    <property type="nucleotide sequence ID" value="NC_002953.3"/>
</dbReference>
<dbReference type="SMR" id="Q6G884"/>
<dbReference type="KEGG" id="sas:SAS1772"/>
<dbReference type="HOGENOM" id="CLU_021594_4_1_9"/>
<dbReference type="UniPathway" id="UPA00223">
    <property type="reaction ID" value="UER01007"/>
</dbReference>
<dbReference type="GO" id="GO:0005737">
    <property type="term" value="C:cytoplasm"/>
    <property type="evidence" value="ECO:0007669"/>
    <property type="project" value="UniProtKB-SubCell"/>
</dbReference>
<dbReference type="GO" id="GO:0004333">
    <property type="term" value="F:fumarate hydratase activity"/>
    <property type="evidence" value="ECO:0007669"/>
    <property type="project" value="UniProtKB-UniRule"/>
</dbReference>
<dbReference type="GO" id="GO:0006106">
    <property type="term" value="P:fumarate metabolic process"/>
    <property type="evidence" value="ECO:0007669"/>
    <property type="project" value="InterPro"/>
</dbReference>
<dbReference type="GO" id="GO:0006108">
    <property type="term" value="P:malate metabolic process"/>
    <property type="evidence" value="ECO:0007669"/>
    <property type="project" value="TreeGrafter"/>
</dbReference>
<dbReference type="GO" id="GO:0006099">
    <property type="term" value="P:tricarboxylic acid cycle"/>
    <property type="evidence" value="ECO:0007669"/>
    <property type="project" value="UniProtKB-UniRule"/>
</dbReference>
<dbReference type="CDD" id="cd01362">
    <property type="entry name" value="Fumarase_classII"/>
    <property type="match status" value="1"/>
</dbReference>
<dbReference type="FunFam" id="1.10.40.30:FF:000002">
    <property type="entry name" value="Fumarate hydratase class II"/>
    <property type="match status" value="1"/>
</dbReference>
<dbReference type="FunFam" id="1.10.275.10:FF:000001">
    <property type="entry name" value="Fumarate hydratase, mitochondrial"/>
    <property type="match status" value="1"/>
</dbReference>
<dbReference type="FunFam" id="1.20.200.10:FF:000001">
    <property type="entry name" value="Fumarate hydratase, mitochondrial"/>
    <property type="match status" value="1"/>
</dbReference>
<dbReference type="Gene3D" id="1.10.40.30">
    <property type="entry name" value="Fumarase/aspartase (C-terminal domain)"/>
    <property type="match status" value="1"/>
</dbReference>
<dbReference type="Gene3D" id="1.20.200.10">
    <property type="entry name" value="Fumarase/aspartase (Central domain)"/>
    <property type="match status" value="1"/>
</dbReference>
<dbReference type="Gene3D" id="1.10.275.10">
    <property type="entry name" value="Fumarase/aspartase (N-terminal domain)"/>
    <property type="match status" value="1"/>
</dbReference>
<dbReference type="HAMAP" id="MF_00743">
    <property type="entry name" value="FumaraseC"/>
    <property type="match status" value="1"/>
</dbReference>
<dbReference type="InterPro" id="IPR005677">
    <property type="entry name" value="Fum_hydII"/>
</dbReference>
<dbReference type="InterPro" id="IPR024083">
    <property type="entry name" value="Fumarase/histidase_N"/>
</dbReference>
<dbReference type="InterPro" id="IPR018951">
    <property type="entry name" value="Fumarase_C_C"/>
</dbReference>
<dbReference type="InterPro" id="IPR020557">
    <property type="entry name" value="Fumarate_lyase_CS"/>
</dbReference>
<dbReference type="InterPro" id="IPR000362">
    <property type="entry name" value="Fumarate_lyase_fam"/>
</dbReference>
<dbReference type="InterPro" id="IPR022761">
    <property type="entry name" value="Fumarate_lyase_N"/>
</dbReference>
<dbReference type="InterPro" id="IPR008948">
    <property type="entry name" value="L-Aspartase-like"/>
</dbReference>
<dbReference type="NCBIfam" id="TIGR00979">
    <property type="entry name" value="fumC_II"/>
    <property type="match status" value="1"/>
</dbReference>
<dbReference type="NCBIfam" id="NF008909">
    <property type="entry name" value="PRK12273.1"/>
    <property type="match status" value="1"/>
</dbReference>
<dbReference type="PANTHER" id="PTHR11444">
    <property type="entry name" value="ASPARTATEAMMONIA/ARGININOSUCCINATE/ADENYLOSUCCINATE LYASE"/>
    <property type="match status" value="1"/>
</dbReference>
<dbReference type="PANTHER" id="PTHR11444:SF1">
    <property type="entry name" value="FUMARATE HYDRATASE, MITOCHONDRIAL"/>
    <property type="match status" value="1"/>
</dbReference>
<dbReference type="Pfam" id="PF10415">
    <property type="entry name" value="FumaraseC_C"/>
    <property type="match status" value="1"/>
</dbReference>
<dbReference type="Pfam" id="PF00206">
    <property type="entry name" value="Lyase_1"/>
    <property type="match status" value="1"/>
</dbReference>
<dbReference type="PRINTS" id="PR00145">
    <property type="entry name" value="ARGSUCLYASE"/>
</dbReference>
<dbReference type="PRINTS" id="PR00149">
    <property type="entry name" value="FUMRATELYASE"/>
</dbReference>
<dbReference type="SUPFAM" id="SSF48557">
    <property type="entry name" value="L-aspartase-like"/>
    <property type="match status" value="1"/>
</dbReference>
<dbReference type="PROSITE" id="PS00163">
    <property type="entry name" value="FUMARATE_LYASES"/>
    <property type="match status" value="1"/>
</dbReference>